<comment type="function">
    <text evidence="1">Required for respiratory activity and maintenance and expression of the mitochondrial genome.</text>
</comment>
<comment type="subcellular location">
    <subcellularLocation>
        <location evidence="1">Mitochondrion</location>
    </subcellularLocation>
</comment>
<comment type="similarity">
    <text evidence="2">Belongs to the RRG8 family.</text>
</comment>
<feature type="chain" id="PRO_0000405470" description="Required for respiratory growth protein 8, mitochondrial">
    <location>
        <begin position="1"/>
        <end position="277"/>
    </location>
</feature>
<sequence length="277" mass="31147">MGLPKSAYKKLLIDCPTRVINKNCAQRVKDVSPLITNFEKWSDKRKKLYFKDEEEMVGHFHLENFNLKNNLYGRLLASPMRAEKISKLKSCRELLIPLKVVPSTGKDQHADKDKLKLVPTLDYSKSYKSSYVLNSASIVQDNLAAATSWFPISVLQTSTPKSLEVDSSTFITEYNANLHAFIKARLSVIPNVGPSSINRVLLICDKRKTPPIEIQVVSHGKGLPITQSVFNLGYLHEPTLEAIVSKDAVTKGIYLDADNDKDLIKHLYSTLLFQSVN</sequence>
<gene>
    <name type="primary">RRG8</name>
    <name type="ORF">EC1118_1P2_4434g</name>
</gene>
<accession>C8ZJD8</accession>
<evidence type="ECO:0000250" key="1"/>
<evidence type="ECO:0000305" key="2"/>
<keyword id="KW-0496">Mitochondrion</keyword>
<reference key="1">
    <citation type="journal article" date="2009" name="Proc. Natl. Acad. Sci. U.S.A.">
        <title>Eukaryote-to-eukaryote gene transfer events revealed by the genome sequence of the wine yeast Saccharomyces cerevisiae EC1118.</title>
        <authorList>
            <person name="Novo M."/>
            <person name="Bigey F."/>
            <person name="Beyne E."/>
            <person name="Galeote V."/>
            <person name="Gavory F."/>
            <person name="Mallet S."/>
            <person name="Cambon B."/>
            <person name="Legras J.-L."/>
            <person name="Wincker P."/>
            <person name="Casaregola S."/>
            <person name="Dequin S."/>
        </authorList>
    </citation>
    <scope>NUCLEOTIDE SEQUENCE [LARGE SCALE GENOMIC DNA]</scope>
    <source>
        <strain>Lalvin EC1118 / Prise de mousse</strain>
    </source>
</reference>
<name>RRG8_YEAS8</name>
<dbReference type="EMBL" id="FN394217">
    <property type="protein sequence ID" value="CAY87069.1"/>
    <property type="molecule type" value="Genomic_DNA"/>
</dbReference>
<dbReference type="HOGENOM" id="CLU_090059_0_0_1"/>
<dbReference type="OrthoDB" id="7020at4893"/>
<dbReference type="Proteomes" id="UP000000286">
    <property type="component" value="Chromosome XVI, Scaffold EC1118_1P2"/>
</dbReference>
<dbReference type="GO" id="GO:0005739">
    <property type="term" value="C:mitochondrion"/>
    <property type="evidence" value="ECO:0007669"/>
    <property type="project" value="UniProtKB-SubCell"/>
</dbReference>
<dbReference type="GO" id="GO:0000002">
    <property type="term" value="P:mitochondrial genome maintenance"/>
    <property type="evidence" value="ECO:0007669"/>
    <property type="project" value="InterPro"/>
</dbReference>
<dbReference type="InterPro" id="IPR031415">
    <property type="entry name" value="Rrg8"/>
</dbReference>
<dbReference type="Pfam" id="PF17068">
    <property type="entry name" value="RRG8"/>
    <property type="match status" value="1"/>
</dbReference>
<organism>
    <name type="scientific">Saccharomyces cerevisiae (strain Lalvin EC1118 / Prise de mousse)</name>
    <name type="common">Baker's yeast</name>
    <dbReference type="NCBI Taxonomy" id="643680"/>
    <lineage>
        <taxon>Eukaryota</taxon>
        <taxon>Fungi</taxon>
        <taxon>Dikarya</taxon>
        <taxon>Ascomycota</taxon>
        <taxon>Saccharomycotina</taxon>
        <taxon>Saccharomycetes</taxon>
        <taxon>Saccharomycetales</taxon>
        <taxon>Saccharomycetaceae</taxon>
        <taxon>Saccharomyces</taxon>
    </lineage>
</organism>
<proteinExistence type="inferred from homology"/>
<protein>
    <recommendedName>
        <fullName>Required for respiratory growth protein 8, mitochondrial</fullName>
    </recommendedName>
</protein>